<gene>
    <name type="primary">Cep170b</name>
    <name type="synonym">Kiaa0284</name>
</gene>
<name>C170B_MOUSE</name>
<sequence length="1574" mass="170821">MSVTSWFLVSSSGTRHRLPRELIFVGRDECELMLQSRSVDKQHAVINYDQDRDEHWVKDLGSLNGTFVNDVRIPDQKYITLKLNDVIRFGYDSNMYVLERVQHRVPEEALKHEKYTSQLQVSVKVSAPKRGDALPDHTPYCESSQPRPEKGDRRHGAEAVAYRTPLYGQPSWWGEDDSGAPSEDRHQEEPYSERPKDLAQQNGELDSCRAPAEPPDYSFRREPSYFEIPTKETPQPPRLPEVPTQEVPTKDQEAGVGGTAPVVQSHASFTIEFDDCSPGKVKIKDHITKFSLRQRRAPSKETTPVETVSAETKVADWLVQNDPSLLRRDGPGDDRHSTKSDLPVHTRTLKGHKHEDGTQSDSEDPLAKTASVSGASAEASGEQVRLQRQIKRDPQELLHNQQAFVIEFFDGDTPRKKRSQSFTHTPPADPKADKRRGPGTSDRDRPGVSVRATGSSSGPQRASSLKREKTEERLGNTSPVPRASTRSFGSVGRRSRLAQDFMAQCMRDSSPATRPAPEKTPPVLPAPLTPRGASPVTPSTTPPPPTDPQLTKARKQEEDDSLSDAGTYTIETEAQDQEVEEARRMIDQVFGVFESPELSRVSSATFRPVIRGDKDESSDGGMAQRMALLQEFASRAPGMAPQMEQQSLLVPGSPGGQKWVSRWASLADSYSDAGLPEDGPGRRTGEPEGPLPVRTRRLLPQLPSGRADSPAGLEAARRNGPGPPELGSEPANCLIGQEDLDPDSLSDASGSDGGRGPEPGTERQEDLAWVRGRRSPRAPGELVPTSFFIGDQNGEATFPKKSFVGPGEVDGPGRVVQTSPSARDGLYVSSNGRMVIQLRSGRSPEPDPAPPKETLTFARQESFTKEPTSGPPAPGKLPHISSHPLLQDLAAARASRLDFHAQDTHLILKETETALAALEARLRSKSADECDGGSTPRPPEDSLSGDSDVDTASTISLLSGKNGPSPTTPQTPGPQKESPLSPPTVPDPGGATPGSARERMSERQHRPTPADLGPGDTSRRAAMRRGHGSRGSLDWPEEERGSGLAHLPSSNHETPEATLAGRQGPRRKPAAPPPSPAAREEQSRSSATAQKVQQALTRSNSLSTPRPTRASRLRRARLGDASDTEAVDGERGTAANPEPANRAAPEQAKKLTRLDILAMPRKRAGSFTGPSDSETAPARTGFSGRSAELYSTSRKPTIAEARAAAKKAAATAANTGPRQPFSRARPGSARYSSNTRRRQQGSDYTSTSEEEYGSHHSSPKHTRSHASTATQTPRGSSSTRARSQGPRDTDDDEEEPDPYGFIVQTAEIAEIARLSQTLVKDVAILAREIHDVAGDGDSLGSPGPTRSPSLGNVPNTPASTISAREELVQRIPEASLNFQKVPPGSMNSHNLDQNMNDSRDDALTNKTRPRNREEVIFDNLMLNPVSQLSHAIRENTEHLAEKMKVLFQNTGRAWEDLEARINSENEVPILKTSNKEISSILKELRRVQKQLEVINAIVDPSLNLDLLMGNRAPSGSGQPGLGKARPAAQSSTSPASVDTLLPALPLRSFPQRANCGPPGLPEPAFLPDAERFLI</sequence>
<accession>Q80U49</accession>
<accession>Q3UH33</accession>
<accession>Q3UHG1</accession>
<accession>Q80UM2</accession>
<reference key="1">
    <citation type="journal article" date="2003" name="DNA Res.">
        <title>Prediction of the coding sequences of mouse homologues of KIAA gene: II. The complete nucleotide sequences of 400 mouse KIAA-homologous cDNAs identified by screening of terminal sequences of cDNA clones randomly sampled from size-fractionated libraries.</title>
        <authorList>
            <person name="Okazaki N."/>
            <person name="Kikuno R."/>
            <person name="Ohara R."/>
            <person name="Inamoto S."/>
            <person name="Aizawa H."/>
            <person name="Yuasa S."/>
            <person name="Nakajima D."/>
            <person name="Nagase T."/>
            <person name="Ohara O."/>
            <person name="Koga H."/>
        </authorList>
    </citation>
    <scope>NUCLEOTIDE SEQUENCE [LARGE SCALE MRNA] (ISOFORM 1)</scope>
</reference>
<reference key="2">
    <citation type="journal article" date="2005" name="Science">
        <title>The transcriptional landscape of the mammalian genome.</title>
        <authorList>
            <person name="Carninci P."/>
            <person name="Kasukawa T."/>
            <person name="Katayama S."/>
            <person name="Gough J."/>
            <person name="Frith M.C."/>
            <person name="Maeda N."/>
            <person name="Oyama R."/>
            <person name="Ravasi T."/>
            <person name="Lenhard B."/>
            <person name="Wells C."/>
            <person name="Kodzius R."/>
            <person name="Shimokawa K."/>
            <person name="Bajic V.B."/>
            <person name="Brenner S.E."/>
            <person name="Batalov S."/>
            <person name="Forrest A.R."/>
            <person name="Zavolan M."/>
            <person name="Davis M.J."/>
            <person name="Wilming L.G."/>
            <person name="Aidinis V."/>
            <person name="Allen J.E."/>
            <person name="Ambesi-Impiombato A."/>
            <person name="Apweiler R."/>
            <person name="Aturaliya R.N."/>
            <person name="Bailey T.L."/>
            <person name="Bansal M."/>
            <person name="Baxter L."/>
            <person name="Beisel K.W."/>
            <person name="Bersano T."/>
            <person name="Bono H."/>
            <person name="Chalk A.M."/>
            <person name="Chiu K.P."/>
            <person name="Choudhary V."/>
            <person name="Christoffels A."/>
            <person name="Clutterbuck D.R."/>
            <person name="Crowe M.L."/>
            <person name="Dalla E."/>
            <person name="Dalrymple B.P."/>
            <person name="de Bono B."/>
            <person name="Della Gatta G."/>
            <person name="di Bernardo D."/>
            <person name="Down T."/>
            <person name="Engstrom P."/>
            <person name="Fagiolini M."/>
            <person name="Faulkner G."/>
            <person name="Fletcher C.F."/>
            <person name="Fukushima T."/>
            <person name="Furuno M."/>
            <person name="Futaki S."/>
            <person name="Gariboldi M."/>
            <person name="Georgii-Hemming P."/>
            <person name="Gingeras T.R."/>
            <person name="Gojobori T."/>
            <person name="Green R.E."/>
            <person name="Gustincich S."/>
            <person name="Harbers M."/>
            <person name="Hayashi Y."/>
            <person name="Hensch T.K."/>
            <person name="Hirokawa N."/>
            <person name="Hill D."/>
            <person name="Huminiecki L."/>
            <person name="Iacono M."/>
            <person name="Ikeo K."/>
            <person name="Iwama A."/>
            <person name="Ishikawa T."/>
            <person name="Jakt M."/>
            <person name="Kanapin A."/>
            <person name="Katoh M."/>
            <person name="Kawasawa Y."/>
            <person name="Kelso J."/>
            <person name="Kitamura H."/>
            <person name="Kitano H."/>
            <person name="Kollias G."/>
            <person name="Krishnan S.P."/>
            <person name="Kruger A."/>
            <person name="Kummerfeld S.K."/>
            <person name="Kurochkin I.V."/>
            <person name="Lareau L.F."/>
            <person name="Lazarevic D."/>
            <person name="Lipovich L."/>
            <person name="Liu J."/>
            <person name="Liuni S."/>
            <person name="McWilliam S."/>
            <person name="Madan Babu M."/>
            <person name="Madera M."/>
            <person name="Marchionni L."/>
            <person name="Matsuda H."/>
            <person name="Matsuzawa S."/>
            <person name="Miki H."/>
            <person name="Mignone F."/>
            <person name="Miyake S."/>
            <person name="Morris K."/>
            <person name="Mottagui-Tabar S."/>
            <person name="Mulder N."/>
            <person name="Nakano N."/>
            <person name="Nakauchi H."/>
            <person name="Ng P."/>
            <person name="Nilsson R."/>
            <person name="Nishiguchi S."/>
            <person name="Nishikawa S."/>
            <person name="Nori F."/>
            <person name="Ohara O."/>
            <person name="Okazaki Y."/>
            <person name="Orlando V."/>
            <person name="Pang K.C."/>
            <person name="Pavan W.J."/>
            <person name="Pavesi G."/>
            <person name="Pesole G."/>
            <person name="Petrovsky N."/>
            <person name="Piazza S."/>
            <person name="Reed J."/>
            <person name="Reid J.F."/>
            <person name="Ring B.Z."/>
            <person name="Ringwald M."/>
            <person name="Rost B."/>
            <person name="Ruan Y."/>
            <person name="Salzberg S.L."/>
            <person name="Sandelin A."/>
            <person name="Schneider C."/>
            <person name="Schoenbach C."/>
            <person name="Sekiguchi K."/>
            <person name="Semple C.A."/>
            <person name="Seno S."/>
            <person name="Sessa L."/>
            <person name="Sheng Y."/>
            <person name="Shibata Y."/>
            <person name="Shimada H."/>
            <person name="Shimada K."/>
            <person name="Silva D."/>
            <person name="Sinclair B."/>
            <person name="Sperling S."/>
            <person name="Stupka E."/>
            <person name="Sugiura K."/>
            <person name="Sultana R."/>
            <person name="Takenaka Y."/>
            <person name="Taki K."/>
            <person name="Tammoja K."/>
            <person name="Tan S.L."/>
            <person name="Tang S."/>
            <person name="Taylor M.S."/>
            <person name="Tegner J."/>
            <person name="Teichmann S.A."/>
            <person name="Ueda H.R."/>
            <person name="van Nimwegen E."/>
            <person name="Verardo R."/>
            <person name="Wei C.L."/>
            <person name="Yagi K."/>
            <person name="Yamanishi H."/>
            <person name="Zabarovsky E."/>
            <person name="Zhu S."/>
            <person name="Zimmer A."/>
            <person name="Hide W."/>
            <person name="Bult C."/>
            <person name="Grimmond S.M."/>
            <person name="Teasdale R.D."/>
            <person name="Liu E.T."/>
            <person name="Brusic V."/>
            <person name="Quackenbush J."/>
            <person name="Wahlestedt C."/>
            <person name="Mattick J.S."/>
            <person name="Hume D.A."/>
            <person name="Kai C."/>
            <person name="Sasaki D."/>
            <person name="Tomaru Y."/>
            <person name="Fukuda S."/>
            <person name="Kanamori-Katayama M."/>
            <person name="Suzuki M."/>
            <person name="Aoki J."/>
            <person name="Arakawa T."/>
            <person name="Iida J."/>
            <person name="Imamura K."/>
            <person name="Itoh M."/>
            <person name="Kato T."/>
            <person name="Kawaji H."/>
            <person name="Kawagashira N."/>
            <person name="Kawashima T."/>
            <person name="Kojima M."/>
            <person name="Kondo S."/>
            <person name="Konno H."/>
            <person name="Nakano K."/>
            <person name="Ninomiya N."/>
            <person name="Nishio T."/>
            <person name="Okada M."/>
            <person name="Plessy C."/>
            <person name="Shibata K."/>
            <person name="Shiraki T."/>
            <person name="Suzuki S."/>
            <person name="Tagami M."/>
            <person name="Waki K."/>
            <person name="Watahiki A."/>
            <person name="Okamura-Oho Y."/>
            <person name="Suzuki H."/>
            <person name="Kawai J."/>
            <person name="Hayashizaki Y."/>
        </authorList>
    </citation>
    <scope>NUCLEOTIDE SEQUENCE [LARGE SCALE MRNA] (ISOFORM 1)</scope>
    <source>
        <strain>C57BL/6J</strain>
        <tissue>Brain</tissue>
    </source>
</reference>
<reference key="3">
    <citation type="journal article" date="2004" name="Genome Res.">
        <title>The status, quality, and expansion of the NIH full-length cDNA project: the Mammalian Gene Collection (MGC).</title>
        <authorList>
            <consortium name="The MGC Project Team"/>
        </authorList>
    </citation>
    <scope>NUCLEOTIDE SEQUENCE [LARGE SCALE MRNA] (ISOFORM 2)</scope>
    <source>
        <tissue>Trophoblast stem cell</tissue>
    </source>
</reference>
<reference key="4">
    <citation type="journal article" date="2006" name="Mol. Cell. Proteomics">
        <title>Comprehensive identification of phosphorylation sites in postsynaptic density preparations.</title>
        <authorList>
            <person name="Trinidad J.C."/>
            <person name="Specht C.G."/>
            <person name="Thalhammer A."/>
            <person name="Schoepfer R."/>
            <person name="Burlingame A.L."/>
        </authorList>
    </citation>
    <scope>PHOSPHORYLATION [LARGE SCALE ANALYSIS] AT SER-1341</scope>
    <scope>IDENTIFICATION BY MASS SPECTROMETRY [LARGE SCALE ANALYSIS]</scope>
    <source>
        <tissue>Brain</tissue>
    </source>
</reference>
<reference key="5">
    <citation type="journal article" date="2007" name="Proc. Natl. Acad. Sci. U.S.A.">
        <title>Large-scale phosphorylation analysis of mouse liver.</title>
        <authorList>
            <person name="Villen J."/>
            <person name="Beausoleil S.A."/>
            <person name="Gerber S.A."/>
            <person name="Gygi S.P."/>
        </authorList>
    </citation>
    <scope>PHOSPHORYLATION [LARGE SCALE ANALYSIS] AT SER-478; SER-709; SER-1122 AND SER-1186</scope>
    <scope>IDENTIFICATION BY MASS SPECTROMETRY [LARGE SCALE ANALYSIS]</scope>
    <source>
        <tissue>Liver</tissue>
    </source>
</reference>
<reference key="6">
    <citation type="journal article" date="2010" name="Cell">
        <title>A tissue-specific atlas of mouse protein phosphorylation and expression.</title>
        <authorList>
            <person name="Huttlin E.L."/>
            <person name="Jedrychowski M.P."/>
            <person name="Elias J.E."/>
            <person name="Goswami T."/>
            <person name="Rad R."/>
            <person name="Beausoleil S.A."/>
            <person name="Villen J."/>
            <person name="Haas W."/>
            <person name="Sowa M.E."/>
            <person name="Gygi S.P."/>
        </authorList>
    </citation>
    <scope>PHOSPHORYLATION [LARGE SCALE ANALYSIS] AT SER-360; SER-478; SER-534; THR-541; SER-709; SER-947; SER-965; SER-981; SER-1122; SER-1166; THR-1289; THR-1345 AND SER-1347</scope>
    <scope>IDENTIFICATION BY MASS SPECTROMETRY [LARGE SCALE ANALYSIS]</scope>
    <source>
        <tissue>Brain</tissue>
        <tissue>Brown adipose tissue</tissue>
        <tissue>Kidney</tissue>
        <tissue>Liver</tissue>
        <tissue>Lung</tissue>
        <tissue>Pancreas</tissue>
        <tissue>Spleen</tissue>
        <tissue>Testis</tissue>
    </source>
</reference>
<feature type="chain" id="PRO_0000282890" description="Centrosomal protein of 170 kDa protein B">
    <location>
        <begin position="1"/>
        <end position="1574"/>
    </location>
</feature>
<feature type="domain" description="FHA" evidence="4">
    <location>
        <begin position="23"/>
        <end position="73"/>
    </location>
</feature>
<feature type="region of interest" description="Disordered" evidence="5">
    <location>
        <begin position="121"/>
        <end position="258"/>
    </location>
</feature>
<feature type="region of interest" description="Disordered" evidence="5">
    <location>
        <begin position="316"/>
        <end position="395"/>
    </location>
</feature>
<feature type="region of interest" description="Disordered" evidence="5">
    <location>
        <begin position="409"/>
        <end position="578"/>
    </location>
</feature>
<feature type="region of interest" description="Disordered" evidence="5">
    <location>
        <begin position="637"/>
        <end position="826"/>
    </location>
</feature>
<feature type="region of interest" description="Disordered" evidence="5">
    <location>
        <begin position="839"/>
        <end position="882"/>
    </location>
</feature>
<feature type="region of interest" description="Disordered" evidence="5">
    <location>
        <begin position="924"/>
        <end position="1300"/>
    </location>
</feature>
<feature type="region of interest" description="Disordered" evidence="5">
    <location>
        <begin position="1333"/>
        <end position="1358"/>
    </location>
</feature>
<feature type="region of interest" description="Disordered" evidence="5">
    <location>
        <begin position="1377"/>
        <end position="1407"/>
    </location>
</feature>
<feature type="region of interest" description="Disordered" evidence="5">
    <location>
        <begin position="1510"/>
        <end position="1535"/>
    </location>
</feature>
<feature type="compositionally biased region" description="Basic and acidic residues" evidence="5">
    <location>
        <begin position="147"/>
        <end position="157"/>
    </location>
</feature>
<feature type="compositionally biased region" description="Basic and acidic residues" evidence="5">
    <location>
        <begin position="182"/>
        <end position="197"/>
    </location>
</feature>
<feature type="compositionally biased region" description="Basic and acidic residues" evidence="5">
    <location>
        <begin position="325"/>
        <end position="344"/>
    </location>
</feature>
<feature type="compositionally biased region" description="Low complexity" evidence="5">
    <location>
        <begin position="370"/>
        <end position="382"/>
    </location>
</feature>
<feature type="compositionally biased region" description="Basic and acidic residues" evidence="5">
    <location>
        <begin position="430"/>
        <end position="446"/>
    </location>
</feature>
<feature type="compositionally biased region" description="Polar residues" evidence="5">
    <location>
        <begin position="452"/>
        <end position="463"/>
    </location>
</feature>
<feature type="compositionally biased region" description="Basic and acidic residues" evidence="5">
    <location>
        <begin position="465"/>
        <end position="474"/>
    </location>
</feature>
<feature type="compositionally biased region" description="Polar residues" evidence="5">
    <location>
        <begin position="475"/>
        <end position="488"/>
    </location>
</feature>
<feature type="compositionally biased region" description="Pro residues" evidence="5">
    <location>
        <begin position="518"/>
        <end position="528"/>
    </location>
</feature>
<feature type="compositionally biased region" description="Polar residues" evidence="5">
    <location>
        <begin position="857"/>
        <end position="867"/>
    </location>
</feature>
<feature type="compositionally biased region" description="Polar residues" evidence="5">
    <location>
        <begin position="950"/>
        <end position="959"/>
    </location>
</feature>
<feature type="compositionally biased region" description="Basic and acidic residues" evidence="5">
    <location>
        <begin position="996"/>
        <end position="1005"/>
    </location>
</feature>
<feature type="compositionally biased region" description="Polar residues" evidence="5">
    <location>
        <begin position="1084"/>
        <end position="1102"/>
    </location>
</feature>
<feature type="compositionally biased region" description="Low complexity" evidence="5">
    <location>
        <begin position="1134"/>
        <end position="1146"/>
    </location>
</feature>
<feature type="compositionally biased region" description="Low complexity" evidence="5">
    <location>
        <begin position="1199"/>
        <end position="1213"/>
    </location>
</feature>
<feature type="compositionally biased region" description="Polar residues" evidence="5">
    <location>
        <begin position="1265"/>
        <end position="1282"/>
    </location>
</feature>
<feature type="compositionally biased region" description="Polar residues" evidence="5">
    <location>
        <begin position="1344"/>
        <end position="1358"/>
    </location>
</feature>
<feature type="compositionally biased region" description="Polar residues" evidence="5">
    <location>
        <begin position="1385"/>
        <end position="1396"/>
    </location>
</feature>
<feature type="modified residue" description="Phosphoserine" evidence="10">
    <location>
        <position position="360"/>
    </location>
</feature>
<feature type="modified residue" description="Phosphoserine" evidence="3">
    <location>
        <position position="421"/>
    </location>
</feature>
<feature type="modified residue" description="Phosphoserine" evidence="9 10">
    <location>
        <position position="478"/>
    </location>
</feature>
<feature type="modified residue" description="Phosphoserine" evidence="3">
    <location>
        <position position="490"/>
    </location>
</feature>
<feature type="modified residue" description="Phosphoserine" evidence="10">
    <location>
        <position position="534"/>
    </location>
</feature>
<feature type="modified residue" description="Phosphothreonine" evidence="3">
    <location>
        <position position="540"/>
    </location>
</feature>
<feature type="modified residue" description="Phosphothreonine" evidence="10">
    <location>
        <position position="541"/>
    </location>
</feature>
<feature type="modified residue" description="Phosphoserine" evidence="3">
    <location>
        <position position="595"/>
    </location>
</feature>
<feature type="modified residue" description="Phosphoserine" evidence="3">
    <location>
        <position position="617"/>
    </location>
</feature>
<feature type="modified residue" description="Phosphoserine" evidence="3">
    <location>
        <position position="653"/>
    </location>
</feature>
<feature type="modified residue" description="Phosphoserine" evidence="9 10">
    <location>
        <position position="709"/>
    </location>
</feature>
<feature type="modified residue" description="Phosphoserine" evidence="3">
    <location>
        <position position="744"/>
    </location>
</feature>
<feature type="modified residue" description="Phosphoserine" evidence="3">
    <location>
        <position position="746"/>
    </location>
</feature>
<feature type="modified residue" description="Phosphoserine" evidence="3">
    <location>
        <position position="749"/>
    </location>
</feature>
<feature type="modified residue" description="Phosphoserine" evidence="3">
    <location>
        <position position="751"/>
    </location>
</feature>
<feature type="modified residue" description="Phosphoserine" evidence="3">
    <location>
        <position position="819"/>
    </location>
</feature>
<feature type="modified residue" description="Phosphoserine" evidence="3">
    <location>
        <position position="843"/>
    </location>
</feature>
<feature type="modified residue" description="Phosphoserine" evidence="10">
    <location>
        <position position="947"/>
    </location>
</feature>
<feature type="modified residue" description="Phosphoserine" evidence="10">
    <location>
        <position position="965"/>
    </location>
</feature>
<feature type="modified residue" description="Phosphoserine" evidence="10">
    <location>
        <position position="981"/>
    </location>
</feature>
<feature type="modified residue" description="Phosphoserine" evidence="9 10">
    <location>
        <position position="1122"/>
    </location>
</feature>
<feature type="modified residue" description="Phosphoserine" evidence="10">
    <location>
        <position position="1166"/>
    </location>
</feature>
<feature type="modified residue" description="Phosphoserine" evidence="9">
    <location>
        <position position="1186"/>
    </location>
</feature>
<feature type="modified residue" description="Phosphothreonine" evidence="10">
    <location>
        <position position="1289"/>
    </location>
</feature>
<feature type="modified residue" description="Phosphoserine" evidence="8">
    <location>
        <position position="1341"/>
    </location>
</feature>
<feature type="modified residue" description="Phosphothreonine" evidence="10">
    <location>
        <position position="1345"/>
    </location>
</feature>
<feature type="modified residue" description="Phosphoserine" evidence="10">
    <location>
        <position position="1347"/>
    </location>
</feature>
<feature type="modified residue" description="Phosphoserine" evidence="3">
    <location>
        <position position="1530"/>
    </location>
</feature>
<feature type="modified residue" description="Phosphoserine" evidence="3">
    <location>
        <position position="1533"/>
    </location>
</feature>
<feature type="splice variant" id="VSP_024249" description="In isoform 2." evidence="6">
    <location>
        <begin position="259"/>
        <end position="1174"/>
    </location>
</feature>
<feature type="sequence conflict" description="In Ref. 2; BAE28024." evidence="7" ref="2">
    <original>E</original>
    <variation>V</variation>
    <location>
        <position position="54"/>
    </location>
</feature>
<feature type="sequence conflict" description="In Ref. 3; AAH50077." evidence="7" ref="3">
    <original>P</original>
    <variation>L</variation>
    <location>
        <position position="237"/>
    </location>
</feature>
<feature type="sequence conflict" description="In Ref. 2; BAE27896." evidence="7" ref="2">
    <original>E</original>
    <variation>G</variation>
    <location>
        <position position="1365"/>
    </location>
</feature>
<feature type="sequence conflict" description="In Ref. 3; AAH50077." evidence="7" ref="3">
    <original>L</original>
    <variation>P</variation>
    <location>
        <position position="1428"/>
    </location>
</feature>
<keyword id="KW-0025">Alternative splicing</keyword>
<keyword id="KW-0963">Cytoplasm</keyword>
<keyword id="KW-0206">Cytoskeleton</keyword>
<keyword id="KW-0493">Microtubule</keyword>
<keyword id="KW-0597">Phosphoprotein</keyword>
<keyword id="KW-1185">Reference proteome</keyword>
<proteinExistence type="evidence at protein level"/>
<protein>
    <recommendedName>
        <fullName>Centrosomal protein of 170 kDa protein B</fullName>
    </recommendedName>
    <alternativeName>
        <fullName>Centrosomal protein 170B</fullName>
        <shortName>Cep170B</shortName>
    </alternativeName>
</protein>
<comment type="function">
    <text evidence="2">Plays a role in microtubule organization.</text>
</comment>
<comment type="subcellular location">
    <subcellularLocation>
        <location evidence="1">Cytoplasm</location>
        <location evidence="1">Cytoskeleton</location>
    </subcellularLocation>
</comment>
<comment type="alternative products">
    <event type="alternative splicing"/>
    <isoform>
        <id>Q80U49-1</id>
        <name>1</name>
        <sequence type="displayed"/>
    </isoform>
    <isoform>
        <id>Q80U49-2</id>
        <name>2</name>
        <sequence type="described" ref="VSP_024249"/>
    </isoform>
</comment>
<comment type="similarity">
    <text evidence="7">Belongs to the CEP170 family.</text>
</comment>
<comment type="sequence caution" evidence="7">
    <conflict type="erroneous initiation">
        <sequence resource="EMBL-CDS" id="BAC65518"/>
    </conflict>
</comment>
<dbReference type="EMBL" id="AK122236">
    <property type="protein sequence ID" value="BAC65518.1"/>
    <property type="status" value="ALT_INIT"/>
    <property type="molecule type" value="mRNA"/>
</dbReference>
<dbReference type="EMBL" id="AK147410">
    <property type="protein sequence ID" value="BAE27896.1"/>
    <property type="molecule type" value="mRNA"/>
</dbReference>
<dbReference type="EMBL" id="AK147612">
    <property type="protein sequence ID" value="BAE28024.1"/>
    <property type="molecule type" value="mRNA"/>
</dbReference>
<dbReference type="EMBL" id="BC050077">
    <property type="protein sequence ID" value="AAH50077.1"/>
    <property type="molecule type" value="mRNA"/>
</dbReference>
<dbReference type="CCDS" id="CCDS56867.1">
    <molecule id="Q80U49-1"/>
</dbReference>
<dbReference type="RefSeq" id="NP_001019773.2">
    <molecule id="Q80U49-1"/>
    <property type="nucleotide sequence ID" value="NM_001024602.4"/>
</dbReference>
<dbReference type="RefSeq" id="XP_006515829.1">
    <molecule id="Q80U49-1"/>
    <property type="nucleotide sequence ID" value="XM_006515766.5"/>
</dbReference>
<dbReference type="SMR" id="Q80U49"/>
<dbReference type="BioGRID" id="229975">
    <property type="interactions" value="20"/>
</dbReference>
<dbReference type="FunCoup" id="Q80U49">
    <property type="interactions" value="43"/>
</dbReference>
<dbReference type="IntAct" id="Q80U49">
    <property type="interactions" value="6"/>
</dbReference>
<dbReference type="MINT" id="Q80U49"/>
<dbReference type="STRING" id="10090.ENSMUSP00000098580"/>
<dbReference type="GlyGen" id="Q80U49">
    <property type="glycosylation" value="7 sites, 1 N-linked glycan (1 site)"/>
</dbReference>
<dbReference type="iPTMnet" id="Q80U49"/>
<dbReference type="PhosphoSitePlus" id="Q80U49"/>
<dbReference type="PaxDb" id="10090-ENSMUSP00000098580"/>
<dbReference type="PeptideAtlas" id="Q80U49"/>
<dbReference type="ProteomicsDB" id="273719">
    <molecule id="Q80U49-1"/>
</dbReference>
<dbReference type="ProteomicsDB" id="273720">
    <molecule id="Q80U49-2"/>
</dbReference>
<dbReference type="Pumba" id="Q80U49"/>
<dbReference type="Antibodypedia" id="54848">
    <property type="antibodies" value="37 antibodies from 14 providers"/>
</dbReference>
<dbReference type="DNASU" id="217882"/>
<dbReference type="Ensembl" id="ENSMUST00000101018.11">
    <molecule id="Q80U49-1"/>
    <property type="protein sequence ID" value="ENSMUSP00000098580.4"/>
    <property type="gene ID" value="ENSMUSG00000072825.13"/>
</dbReference>
<dbReference type="Ensembl" id="ENSMUST00000222711.2">
    <molecule id="Q80U49-1"/>
    <property type="protein sequence ID" value="ENSMUSP00000152451.2"/>
    <property type="gene ID" value="ENSMUSG00000072825.13"/>
</dbReference>
<dbReference type="GeneID" id="217882"/>
<dbReference type="KEGG" id="mmu:217882"/>
<dbReference type="UCSC" id="uc007pfb.1">
    <molecule id="Q80U49-1"/>
    <property type="organism name" value="mouse"/>
</dbReference>
<dbReference type="AGR" id="MGI:2145043"/>
<dbReference type="CTD" id="283638"/>
<dbReference type="MGI" id="MGI:2145043">
    <property type="gene designation" value="Cep170b"/>
</dbReference>
<dbReference type="VEuPathDB" id="HostDB:ENSMUSG00000072825"/>
<dbReference type="eggNOG" id="ENOG502QSH8">
    <property type="taxonomic scope" value="Eukaryota"/>
</dbReference>
<dbReference type="GeneTree" id="ENSGT00940000157058"/>
<dbReference type="HOGENOM" id="CLU_003940_1_0_1"/>
<dbReference type="InParanoid" id="Q80U49"/>
<dbReference type="OMA" id="CAGRKPT"/>
<dbReference type="OrthoDB" id="444265at2759"/>
<dbReference type="PhylomeDB" id="Q80U49"/>
<dbReference type="TreeFam" id="TF328469"/>
<dbReference type="BioGRID-ORCS" id="217882">
    <property type="hits" value="2 hits in 79 CRISPR screens"/>
</dbReference>
<dbReference type="CD-CODE" id="CE726F99">
    <property type="entry name" value="Postsynaptic density"/>
</dbReference>
<dbReference type="ChiTaRS" id="Cep170b">
    <property type="organism name" value="mouse"/>
</dbReference>
<dbReference type="PRO" id="PR:Q80U49"/>
<dbReference type="Proteomes" id="UP000000589">
    <property type="component" value="Chromosome 12"/>
</dbReference>
<dbReference type="RNAct" id="Q80U49">
    <property type="molecule type" value="protein"/>
</dbReference>
<dbReference type="Bgee" id="ENSMUSG00000072825">
    <property type="expression patterns" value="Expressed in primary visual cortex and 86 other cell types or tissues"/>
</dbReference>
<dbReference type="ExpressionAtlas" id="Q80U49">
    <property type="expression patterns" value="baseline and differential"/>
</dbReference>
<dbReference type="GO" id="GO:0005737">
    <property type="term" value="C:cytoplasm"/>
    <property type="evidence" value="ECO:0007669"/>
    <property type="project" value="UniProtKB-KW"/>
</dbReference>
<dbReference type="GO" id="GO:0005874">
    <property type="term" value="C:microtubule"/>
    <property type="evidence" value="ECO:0007669"/>
    <property type="project" value="UniProtKB-KW"/>
</dbReference>
<dbReference type="CDD" id="cd22725">
    <property type="entry name" value="FHA_Cep170B"/>
    <property type="match status" value="1"/>
</dbReference>
<dbReference type="Gene3D" id="2.60.200.20">
    <property type="match status" value="1"/>
</dbReference>
<dbReference type="InterPro" id="IPR051176">
    <property type="entry name" value="Cent_Immune-Sig_Mod"/>
</dbReference>
<dbReference type="InterPro" id="IPR029300">
    <property type="entry name" value="CEP170_C"/>
</dbReference>
<dbReference type="InterPro" id="IPR000253">
    <property type="entry name" value="FHA_dom"/>
</dbReference>
<dbReference type="InterPro" id="IPR008984">
    <property type="entry name" value="SMAD_FHA_dom_sf"/>
</dbReference>
<dbReference type="PANTHER" id="PTHR15715">
    <property type="entry name" value="CENTROSOMAL PROTEIN OF 170 KDA"/>
    <property type="match status" value="1"/>
</dbReference>
<dbReference type="PANTHER" id="PTHR15715:SF18">
    <property type="entry name" value="CENTROSOMAL PROTEIN OF 170 KDA PROTEIN B"/>
    <property type="match status" value="1"/>
</dbReference>
<dbReference type="Pfam" id="PF15308">
    <property type="entry name" value="CEP170_C"/>
    <property type="match status" value="1"/>
</dbReference>
<dbReference type="Pfam" id="PF00498">
    <property type="entry name" value="FHA"/>
    <property type="match status" value="1"/>
</dbReference>
<dbReference type="SMART" id="SM00240">
    <property type="entry name" value="FHA"/>
    <property type="match status" value="1"/>
</dbReference>
<dbReference type="SUPFAM" id="SSF49879">
    <property type="entry name" value="SMAD/FHA domain"/>
    <property type="match status" value="1"/>
</dbReference>
<dbReference type="PROSITE" id="PS50006">
    <property type="entry name" value="FHA_DOMAIN"/>
    <property type="match status" value="1"/>
</dbReference>
<organism>
    <name type="scientific">Mus musculus</name>
    <name type="common">Mouse</name>
    <dbReference type="NCBI Taxonomy" id="10090"/>
    <lineage>
        <taxon>Eukaryota</taxon>
        <taxon>Metazoa</taxon>
        <taxon>Chordata</taxon>
        <taxon>Craniata</taxon>
        <taxon>Vertebrata</taxon>
        <taxon>Euteleostomi</taxon>
        <taxon>Mammalia</taxon>
        <taxon>Eutheria</taxon>
        <taxon>Euarchontoglires</taxon>
        <taxon>Glires</taxon>
        <taxon>Rodentia</taxon>
        <taxon>Myomorpha</taxon>
        <taxon>Muroidea</taxon>
        <taxon>Muridae</taxon>
        <taxon>Murinae</taxon>
        <taxon>Mus</taxon>
        <taxon>Mus</taxon>
    </lineage>
</organism>
<evidence type="ECO:0000250" key="1">
    <source>
        <dbReference type="UniProtKB" id="Q498L0"/>
    </source>
</evidence>
<evidence type="ECO:0000250" key="2">
    <source>
        <dbReference type="UniProtKB" id="Q5SW79"/>
    </source>
</evidence>
<evidence type="ECO:0000250" key="3">
    <source>
        <dbReference type="UniProtKB" id="Q9Y4F5"/>
    </source>
</evidence>
<evidence type="ECO:0000255" key="4">
    <source>
        <dbReference type="PROSITE-ProRule" id="PRU00086"/>
    </source>
</evidence>
<evidence type="ECO:0000256" key="5">
    <source>
        <dbReference type="SAM" id="MobiDB-lite"/>
    </source>
</evidence>
<evidence type="ECO:0000303" key="6">
    <source>
    </source>
</evidence>
<evidence type="ECO:0000305" key="7"/>
<evidence type="ECO:0007744" key="8">
    <source>
    </source>
</evidence>
<evidence type="ECO:0007744" key="9">
    <source>
    </source>
</evidence>
<evidence type="ECO:0007744" key="10">
    <source>
    </source>
</evidence>